<accession>Q2FXH9</accession>
<organism>
    <name type="scientific">Staphylococcus aureus (strain NCTC 8325 / PS 47)</name>
    <dbReference type="NCBI Taxonomy" id="93061"/>
    <lineage>
        <taxon>Bacteria</taxon>
        <taxon>Bacillati</taxon>
        <taxon>Bacillota</taxon>
        <taxon>Bacilli</taxon>
        <taxon>Bacillales</taxon>
        <taxon>Staphylococcaceae</taxon>
        <taxon>Staphylococcus</taxon>
    </lineage>
</organism>
<protein>
    <recommendedName>
        <fullName>Putative dipeptidase SAOUHSC_01868</fullName>
        <ecNumber>3.4.13.-</ecNumber>
    </recommendedName>
</protein>
<gene>
    <name type="ordered locus">SAOUHSC_01868</name>
</gene>
<comment type="cofactor">
    <cofactor evidence="1">
        <name>Zn(2+)</name>
        <dbReference type="ChEBI" id="CHEBI:29105"/>
    </cofactor>
    <text evidence="1">Binds 2 Zn(2+) ions per subunit.</text>
</comment>
<comment type="similarity">
    <text evidence="2">Belongs to the peptidase M20A family.</text>
</comment>
<name>PEPVL_STAA8</name>
<proteinExistence type="inferred from homology"/>
<reference key="1">
    <citation type="book" date="2006" name="Gram positive pathogens, 2nd edition">
        <title>The Staphylococcus aureus NCTC 8325 genome.</title>
        <editorList>
            <person name="Fischetti V."/>
            <person name="Novick R."/>
            <person name="Ferretti J."/>
            <person name="Portnoy D."/>
            <person name="Rood J."/>
        </editorList>
        <authorList>
            <person name="Gillaspy A.F."/>
            <person name="Worrell V."/>
            <person name="Orvis J."/>
            <person name="Roe B.A."/>
            <person name="Dyer D.W."/>
            <person name="Iandolo J.J."/>
        </authorList>
    </citation>
    <scope>NUCLEOTIDE SEQUENCE [LARGE SCALE GENOMIC DNA]</scope>
    <source>
        <strain>NCTC 8325 / PS 47</strain>
    </source>
</reference>
<dbReference type="EC" id="3.4.13.-"/>
<dbReference type="EMBL" id="CP000253">
    <property type="protein sequence ID" value="ABD30933.1"/>
    <property type="molecule type" value="Genomic_DNA"/>
</dbReference>
<dbReference type="RefSeq" id="YP_500371.1">
    <property type="nucleotide sequence ID" value="NC_007795.1"/>
</dbReference>
<dbReference type="SMR" id="Q2FXH9"/>
<dbReference type="STRING" id="93061.SAOUHSC_01868"/>
<dbReference type="PaxDb" id="1280-SAXN108_1782"/>
<dbReference type="GeneID" id="3921757"/>
<dbReference type="KEGG" id="sao:SAOUHSC_01868"/>
<dbReference type="PATRIC" id="fig|93061.5.peg.1700"/>
<dbReference type="eggNOG" id="COG0624">
    <property type="taxonomic scope" value="Bacteria"/>
</dbReference>
<dbReference type="HOGENOM" id="CLU_031786_2_0_9"/>
<dbReference type="OrthoDB" id="9761532at2"/>
<dbReference type="PRO" id="PR:Q2FXH9"/>
<dbReference type="Proteomes" id="UP000008816">
    <property type="component" value="Chromosome"/>
</dbReference>
<dbReference type="GO" id="GO:0008777">
    <property type="term" value="F:acetylornithine deacetylase activity"/>
    <property type="evidence" value="ECO:0000318"/>
    <property type="project" value="GO_Central"/>
</dbReference>
<dbReference type="GO" id="GO:0016805">
    <property type="term" value="F:dipeptidase activity"/>
    <property type="evidence" value="ECO:0007669"/>
    <property type="project" value="UniProtKB-KW"/>
</dbReference>
<dbReference type="GO" id="GO:0008237">
    <property type="term" value="F:metallopeptidase activity"/>
    <property type="evidence" value="ECO:0007669"/>
    <property type="project" value="UniProtKB-KW"/>
</dbReference>
<dbReference type="GO" id="GO:0008270">
    <property type="term" value="F:zinc ion binding"/>
    <property type="evidence" value="ECO:0007669"/>
    <property type="project" value="InterPro"/>
</dbReference>
<dbReference type="GO" id="GO:0006526">
    <property type="term" value="P:L-arginine biosynthetic process"/>
    <property type="evidence" value="ECO:0000318"/>
    <property type="project" value="GO_Central"/>
</dbReference>
<dbReference type="GO" id="GO:0006508">
    <property type="term" value="P:proteolysis"/>
    <property type="evidence" value="ECO:0007669"/>
    <property type="project" value="UniProtKB-KW"/>
</dbReference>
<dbReference type="CDD" id="cd03888">
    <property type="entry name" value="M20_PepV"/>
    <property type="match status" value="1"/>
</dbReference>
<dbReference type="Gene3D" id="3.30.70.360">
    <property type="match status" value="2"/>
</dbReference>
<dbReference type="Gene3D" id="3.40.630.10">
    <property type="entry name" value="Zn peptidases"/>
    <property type="match status" value="1"/>
</dbReference>
<dbReference type="InterPro" id="IPR036264">
    <property type="entry name" value="Bact_exopeptidase_dim_dom"/>
</dbReference>
<dbReference type="InterPro" id="IPR010964">
    <property type="entry name" value="M20A_pepV-rel"/>
</dbReference>
<dbReference type="InterPro" id="IPR002933">
    <property type="entry name" value="Peptidase_M20"/>
</dbReference>
<dbReference type="InterPro" id="IPR050072">
    <property type="entry name" value="Peptidase_M20A"/>
</dbReference>
<dbReference type="NCBIfam" id="TIGR01887">
    <property type="entry name" value="dipeptidaselike"/>
    <property type="match status" value="1"/>
</dbReference>
<dbReference type="NCBIfam" id="NF005591">
    <property type="entry name" value="PRK07318.1"/>
    <property type="match status" value="1"/>
</dbReference>
<dbReference type="PANTHER" id="PTHR43808">
    <property type="entry name" value="ACETYLORNITHINE DEACETYLASE"/>
    <property type="match status" value="1"/>
</dbReference>
<dbReference type="PANTHER" id="PTHR43808:SF31">
    <property type="entry name" value="N-ACETYL-L-CITRULLINE DEACETYLASE"/>
    <property type="match status" value="1"/>
</dbReference>
<dbReference type="Pfam" id="PF01546">
    <property type="entry name" value="Peptidase_M20"/>
    <property type="match status" value="1"/>
</dbReference>
<dbReference type="SUPFAM" id="SSF55031">
    <property type="entry name" value="Bacterial exopeptidase dimerisation domain"/>
    <property type="match status" value="1"/>
</dbReference>
<dbReference type="SUPFAM" id="SSF53187">
    <property type="entry name" value="Zn-dependent exopeptidases"/>
    <property type="match status" value="1"/>
</dbReference>
<evidence type="ECO:0000250" key="1"/>
<evidence type="ECO:0000305" key="2"/>
<feature type="chain" id="PRO_0000282627" description="Putative dipeptidase SAOUHSC_01868">
    <location>
        <begin position="1"/>
        <end position="469"/>
    </location>
</feature>
<feature type="active site" evidence="1">
    <location>
        <position position="86"/>
    </location>
</feature>
<feature type="active site" description="Proton acceptor" evidence="1">
    <location>
        <position position="149"/>
    </location>
</feature>
<feature type="binding site" evidence="1">
    <location>
        <position position="84"/>
    </location>
    <ligand>
        <name>Zn(2+)</name>
        <dbReference type="ChEBI" id="CHEBI:29105"/>
        <label>2</label>
    </ligand>
</feature>
<feature type="binding site" evidence="1">
    <location>
        <position position="115"/>
    </location>
    <ligand>
        <name>Zn(2+)</name>
        <dbReference type="ChEBI" id="CHEBI:29105"/>
        <label>1</label>
    </ligand>
</feature>
<feature type="binding site" evidence="1">
    <location>
        <position position="115"/>
    </location>
    <ligand>
        <name>Zn(2+)</name>
        <dbReference type="ChEBI" id="CHEBI:29105"/>
        <label>2</label>
    </ligand>
</feature>
<feature type="binding site" evidence="1">
    <location>
        <position position="150"/>
    </location>
    <ligand>
        <name>Zn(2+)</name>
        <dbReference type="ChEBI" id="CHEBI:29105"/>
        <label>1</label>
    </ligand>
</feature>
<feature type="binding site" evidence="1">
    <location>
        <position position="173"/>
    </location>
    <ligand>
        <name>Zn(2+)</name>
        <dbReference type="ChEBI" id="CHEBI:29105"/>
        <label>2</label>
    </ligand>
</feature>
<feature type="binding site" evidence="1">
    <location>
        <position position="440"/>
    </location>
    <ligand>
        <name>Zn(2+)</name>
        <dbReference type="ChEBI" id="CHEBI:29105"/>
        <label>1</label>
    </ligand>
</feature>
<keyword id="KW-0224">Dipeptidase</keyword>
<keyword id="KW-0378">Hydrolase</keyword>
<keyword id="KW-0479">Metal-binding</keyword>
<keyword id="KW-0482">Metalloprotease</keyword>
<keyword id="KW-0645">Protease</keyword>
<keyword id="KW-1185">Reference proteome</keyword>
<keyword id="KW-0862">Zinc</keyword>
<sequence length="469" mass="52824">MWKEKVQQYEDQIINDLKGLLAIESVRDDAKASEDAPVGPGPRKALDYMYEIAHRDGFTTHDVDHIAGRIEAGKGNDVLGILCHVDVVPAGDGWDSNPFEPVVTEDAIIARGTLDDKGPTIAAYYAIKILEDMNVDWKKRIHMIIGTDEESDWKCTDRYFKTEEMPTLGFAPDAEFPCIHGEKGITTFDLVQNKLTEDQDEPDYELITFKSGERYNMVPDHAEARVLVKENMTDVIQDFEYFLEQNHLQGDSTVDSGILVLTVEGKAVHGMDPSIGVNAGLYLLKFLASLNLDNNAQAFVAFSNRYLFNSDFGEKMGMKFHTDVMGDVTTNIGVITYDNENAGLFGINLRYPEGFEFEKAMDRFANEIQQYGFEVKLGKVQPPHYVDKNDPFVQKLVTAYRNQTNDMTEPYTIGGGTYARNLDKGVAFGAMFSDSEDLMHQKNEYITKKQLFNATSIYLEAIYSLCVEE</sequence>